<accession>Q0S3B9</accession>
<protein>
    <recommendedName>
        <fullName evidence="1">Chaperonin GroEL 2</fullName>
        <ecNumber evidence="1">5.6.1.7</ecNumber>
    </recommendedName>
    <alternativeName>
        <fullName evidence="1">60 kDa chaperonin 2</fullName>
    </alternativeName>
    <alternativeName>
        <fullName evidence="1">Chaperonin-60 2</fullName>
        <shortName evidence="1">Cpn60 2</shortName>
    </alternativeName>
</protein>
<organism>
    <name type="scientific">Rhodococcus jostii (strain RHA1)</name>
    <dbReference type="NCBI Taxonomy" id="101510"/>
    <lineage>
        <taxon>Bacteria</taxon>
        <taxon>Bacillati</taxon>
        <taxon>Actinomycetota</taxon>
        <taxon>Actinomycetes</taxon>
        <taxon>Mycobacteriales</taxon>
        <taxon>Nocardiaceae</taxon>
        <taxon>Rhodococcus</taxon>
    </lineage>
</organism>
<dbReference type="EC" id="5.6.1.7" evidence="1"/>
<dbReference type="EMBL" id="CP000431">
    <property type="protein sequence ID" value="ABG97967.1"/>
    <property type="molecule type" value="Genomic_DNA"/>
</dbReference>
<dbReference type="RefSeq" id="WP_009479402.1">
    <property type="nucleotide sequence ID" value="NC_008268.1"/>
</dbReference>
<dbReference type="SMR" id="Q0S3B9"/>
<dbReference type="KEGG" id="rha:RHA1_ro06190"/>
<dbReference type="eggNOG" id="COG0459">
    <property type="taxonomic scope" value="Bacteria"/>
</dbReference>
<dbReference type="HOGENOM" id="CLU_016503_3_0_11"/>
<dbReference type="OrthoDB" id="9766614at2"/>
<dbReference type="Proteomes" id="UP000008710">
    <property type="component" value="Chromosome"/>
</dbReference>
<dbReference type="GO" id="GO:0005737">
    <property type="term" value="C:cytoplasm"/>
    <property type="evidence" value="ECO:0007669"/>
    <property type="project" value="UniProtKB-SubCell"/>
</dbReference>
<dbReference type="GO" id="GO:0005524">
    <property type="term" value="F:ATP binding"/>
    <property type="evidence" value="ECO:0007669"/>
    <property type="project" value="UniProtKB-UniRule"/>
</dbReference>
<dbReference type="GO" id="GO:0140662">
    <property type="term" value="F:ATP-dependent protein folding chaperone"/>
    <property type="evidence" value="ECO:0007669"/>
    <property type="project" value="InterPro"/>
</dbReference>
<dbReference type="GO" id="GO:0016853">
    <property type="term" value="F:isomerase activity"/>
    <property type="evidence" value="ECO:0007669"/>
    <property type="project" value="UniProtKB-KW"/>
</dbReference>
<dbReference type="GO" id="GO:0051082">
    <property type="term" value="F:unfolded protein binding"/>
    <property type="evidence" value="ECO:0007669"/>
    <property type="project" value="UniProtKB-UniRule"/>
</dbReference>
<dbReference type="GO" id="GO:0042026">
    <property type="term" value="P:protein refolding"/>
    <property type="evidence" value="ECO:0007669"/>
    <property type="project" value="UniProtKB-UniRule"/>
</dbReference>
<dbReference type="CDD" id="cd03344">
    <property type="entry name" value="GroEL"/>
    <property type="match status" value="1"/>
</dbReference>
<dbReference type="FunFam" id="3.50.7.10:FF:000001">
    <property type="entry name" value="60 kDa chaperonin"/>
    <property type="match status" value="1"/>
</dbReference>
<dbReference type="Gene3D" id="3.50.7.10">
    <property type="entry name" value="GroEL"/>
    <property type="match status" value="1"/>
</dbReference>
<dbReference type="Gene3D" id="1.10.560.10">
    <property type="entry name" value="GroEL-like equatorial domain"/>
    <property type="match status" value="1"/>
</dbReference>
<dbReference type="Gene3D" id="3.30.260.10">
    <property type="entry name" value="TCP-1-like chaperonin intermediate domain"/>
    <property type="match status" value="1"/>
</dbReference>
<dbReference type="HAMAP" id="MF_00600">
    <property type="entry name" value="CH60"/>
    <property type="match status" value="1"/>
</dbReference>
<dbReference type="InterPro" id="IPR001844">
    <property type="entry name" value="Cpn60/GroEL"/>
</dbReference>
<dbReference type="InterPro" id="IPR002423">
    <property type="entry name" value="Cpn60/GroEL/TCP-1"/>
</dbReference>
<dbReference type="InterPro" id="IPR027409">
    <property type="entry name" value="GroEL-like_apical_dom_sf"/>
</dbReference>
<dbReference type="InterPro" id="IPR027413">
    <property type="entry name" value="GROEL-like_equatorial_sf"/>
</dbReference>
<dbReference type="InterPro" id="IPR027410">
    <property type="entry name" value="TCP-1-like_intermed_sf"/>
</dbReference>
<dbReference type="NCBIfam" id="TIGR02348">
    <property type="entry name" value="GroEL"/>
    <property type="match status" value="1"/>
</dbReference>
<dbReference type="NCBIfam" id="NF000592">
    <property type="entry name" value="PRK00013.1"/>
    <property type="match status" value="1"/>
</dbReference>
<dbReference type="NCBIfam" id="NF009487">
    <property type="entry name" value="PRK12849.1"/>
    <property type="match status" value="1"/>
</dbReference>
<dbReference type="NCBIfam" id="NF009488">
    <property type="entry name" value="PRK12850.1"/>
    <property type="match status" value="1"/>
</dbReference>
<dbReference type="NCBIfam" id="NF009489">
    <property type="entry name" value="PRK12851.1"/>
    <property type="match status" value="1"/>
</dbReference>
<dbReference type="PANTHER" id="PTHR45633">
    <property type="entry name" value="60 KDA HEAT SHOCK PROTEIN, MITOCHONDRIAL"/>
    <property type="match status" value="1"/>
</dbReference>
<dbReference type="Pfam" id="PF00118">
    <property type="entry name" value="Cpn60_TCP1"/>
    <property type="match status" value="1"/>
</dbReference>
<dbReference type="PRINTS" id="PR00298">
    <property type="entry name" value="CHAPERONIN60"/>
</dbReference>
<dbReference type="SUPFAM" id="SSF52029">
    <property type="entry name" value="GroEL apical domain-like"/>
    <property type="match status" value="1"/>
</dbReference>
<dbReference type="SUPFAM" id="SSF48592">
    <property type="entry name" value="GroEL equatorial domain-like"/>
    <property type="match status" value="1"/>
</dbReference>
<dbReference type="SUPFAM" id="SSF54849">
    <property type="entry name" value="GroEL-intermediate domain like"/>
    <property type="match status" value="1"/>
</dbReference>
<sequence>MSKQIEFNEVARRSLERGVDKLADAVKVTLGPRGRHVVLAKAFGGPTVTNDGVSIAREIELEDPFENLGAQLVKSVATKTNDVAGDGTTTATVLAQAIVRGGLKNIAAGANPMALGIGINAAADKVVEALLAAAKPVEGKTSIAQVATVSSRDEEIGEMVGEALTRVGTDGVVTVEESSTLATELVITEGVQFDKGYLSPYFVTDLDAQKAVYEDALVLLYREKITSLPDFLPLLEKVAESGKPLLIIAEDVEGEVLSTLVVNSIRKTIKAVAVKAPFFGDRRKAFLDDLAVVTGGTVINSDVGLTLKDAGLDLLGSARRVVVSKDETTIVDGAGTDDDIKGRVAQLRREIENTDSDWDREKLEERLAKLAGGVAVIKVGAATETDLKERKFRVEDAVNAAKAAVAEGIVPGGGSALVQASTELADNLGLTGDEATGVKVVREALQAPLYWIASNAGLDGSVVTSKVAEQPKGHGFNAATLTYGDLLADGVVDPVKVTRSAVVNAASVARMILTTESAVVEKPAEENEQQTGHGHSH</sequence>
<name>CH602_RHOJR</name>
<feature type="chain" id="PRO_0000256967" description="Chaperonin GroEL 2">
    <location>
        <begin position="1"/>
        <end position="537"/>
    </location>
</feature>
<feature type="binding site" evidence="1">
    <location>
        <begin position="29"/>
        <end position="32"/>
    </location>
    <ligand>
        <name>ATP</name>
        <dbReference type="ChEBI" id="CHEBI:30616"/>
    </ligand>
</feature>
<feature type="binding site" evidence="1">
    <location>
        <begin position="86"/>
        <end position="90"/>
    </location>
    <ligand>
        <name>ATP</name>
        <dbReference type="ChEBI" id="CHEBI:30616"/>
    </ligand>
</feature>
<feature type="binding site" evidence="1">
    <location>
        <position position="413"/>
    </location>
    <ligand>
        <name>ATP</name>
        <dbReference type="ChEBI" id="CHEBI:30616"/>
    </ligand>
</feature>
<feature type="binding site" evidence="1">
    <location>
        <begin position="477"/>
        <end position="479"/>
    </location>
    <ligand>
        <name>ATP</name>
        <dbReference type="ChEBI" id="CHEBI:30616"/>
    </ligand>
</feature>
<feature type="binding site" evidence="1">
    <location>
        <position position="493"/>
    </location>
    <ligand>
        <name>ATP</name>
        <dbReference type="ChEBI" id="CHEBI:30616"/>
    </ligand>
</feature>
<comment type="function">
    <text evidence="1">Together with its co-chaperonin GroES, plays an essential role in assisting protein folding. The GroEL-GroES system forms a nano-cage that allows encapsulation of the non-native substrate proteins and provides a physical environment optimized to promote and accelerate protein folding.</text>
</comment>
<comment type="catalytic activity">
    <reaction evidence="1">
        <text>ATP + H2O + a folded polypeptide = ADP + phosphate + an unfolded polypeptide.</text>
        <dbReference type="EC" id="5.6.1.7"/>
    </reaction>
</comment>
<comment type="subunit">
    <text evidence="1">Forms a cylinder of 14 subunits composed of two heptameric rings stacked back-to-back. Interacts with the co-chaperonin GroES.</text>
</comment>
<comment type="subcellular location">
    <subcellularLocation>
        <location evidence="1">Cytoplasm</location>
    </subcellularLocation>
</comment>
<comment type="similarity">
    <text evidence="1">Belongs to the chaperonin (HSP60) family.</text>
</comment>
<keyword id="KW-0067">ATP-binding</keyword>
<keyword id="KW-0143">Chaperone</keyword>
<keyword id="KW-0963">Cytoplasm</keyword>
<keyword id="KW-0413">Isomerase</keyword>
<keyword id="KW-0547">Nucleotide-binding</keyword>
<proteinExistence type="inferred from homology"/>
<reference key="1">
    <citation type="journal article" date="2006" name="Proc. Natl. Acad. Sci. U.S.A.">
        <title>The complete genome of Rhodococcus sp. RHA1 provides insights into a catabolic powerhouse.</title>
        <authorList>
            <person name="McLeod M.P."/>
            <person name="Warren R.L."/>
            <person name="Hsiao W.W.L."/>
            <person name="Araki N."/>
            <person name="Myhre M."/>
            <person name="Fernandes C."/>
            <person name="Miyazawa D."/>
            <person name="Wong W."/>
            <person name="Lillquist A.L."/>
            <person name="Wang D."/>
            <person name="Dosanjh M."/>
            <person name="Hara H."/>
            <person name="Petrescu A."/>
            <person name="Morin R.D."/>
            <person name="Yang G."/>
            <person name="Stott J.M."/>
            <person name="Schein J.E."/>
            <person name="Shin H."/>
            <person name="Smailus D."/>
            <person name="Siddiqui A.S."/>
            <person name="Marra M.A."/>
            <person name="Jones S.J.M."/>
            <person name="Holt R."/>
            <person name="Brinkman F.S.L."/>
            <person name="Miyauchi K."/>
            <person name="Fukuda M."/>
            <person name="Davies J.E."/>
            <person name="Mohn W.W."/>
            <person name="Eltis L.D."/>
        </authorList>
    </citation>
    <scope>NUCLEOTIDE SEQUENCE [LARGE SCALE GENOMIC DNA]</scope>
    <source>
        <strain>RHA1</strain>
    </source>
</reference>
<evidence type="ECO:0000255" key="1">
    <source>
        <dbReference type="HAMAP-Rule" id="MF_00600"/>
    </source>
</evidence>
<gene>
    <name evidence="1" type="primary">groEL2</name>
    <name evidence="1" type="synonym">groL2</name>
    <name type="ordered locus">RHA1_ro06190</name>
</gene>